<keyword id="KW-0963">Cytoplasm</keyword>
<keyword id="KW-0378">Hydrolase</keyword>
<keyword id="KW-0479">Metal-binding</keyword>
<keyword id="KW-0862">Zinc</keyword>
<proteinExistence type="inferred from homology"/>
<gene>
    <name type="ordered locus">GTNG_0529</name>
</gene>
<reference key="1">
    <citation type="journal article" date="2007" name="Proc. Natl. Acad. Sci. U.S.A.">
        <title>Genome and proteome of long-chain alkane degrading Geobacillus thermodenitrificans NG80-2 isolated from a deep-subsurface oil reservoir.</title>
        <authorList>
            <person name="Feng L."/>
            <person name="Wang W."/>
            <person name="Cheng J."/>
            <person name="Ren Y."/>
            <person name="Zhao G."/>
            <person name="Gao C."/>
            <person name="Tang Y."/>
            <person name="Liu X."/>
            <person name="Han W."/>
            <person name="Peng X."/>
            <person name="Liu R."/>
            <person name="Wang L."/>
        </authorList>
    </citation>
    <scope>NUCLEOTIDE SEQUENCE [LARGE SCALE GENOMIC DNA]</scope>
    <source>
        <strain>NG80-2</strain>
    </source>
</reference>
<comment type="function">
    <text evidence="1">Possible metal-dependent hydrolase.</text>
</comment>
<comment type="cofactor">
    <cofactor evidence="1">
        <name>Zn(2+)</name>
        <dbReference type="ChEBI" id="CHEBI:29105"/>
    </cofactor>
    <text evidence="1">Binds 1 zinc ion per subunit.</text>
</comment>
<comment type="subunit">
    <text evidence="1">Homodimer.</text>
</comment>
<comment type="subcellular location">
    <subcellularLocation>
        <location evidence="1">Cytoplasm</location>
    </subcellularLocation>
</comment>
<comment type="similarity">
    <text evidence="1">Belongs to the metal hydrolase YfiT family.</text>
</comment>
<evidence type="ECO:0000255" key="1">
    <source>
        <dbReference type="HAMAP-Rule" id="MF_01256"/>
    </source>
</evidence>
<name>Y529_GEOTN</name>
<accession>A4IKQ7</accession>
<feature type="chain" id="PRO_1000067244" description="Putative metal-dependent hydrolase GTNG_0529">
    <location>
        <begin position="1"/>
        <end position="178"/>
    </location>
</feature>
<feature type="binding site" evidence="1">
    <location>
        <position position="68"/>
    </location>
    <ligand>
        <name>Zn(2+)</name>
        <dbReference type="ChEBI" id="CHEBI:29105"/>
    </ligand>
</feature>
<feature type="binding site" evidence="1">
    <location>
        <position position="161"/>
    </location>
    <ligand>
        <name>Zn(2+)</name>
        <dbReference type="ChEBI" id="CHEBI:29105"/>
    </ligand>
</feature>
<feature type="binding site" evidence="1">
    <location>
        <position position="165"/>
    </location>
    <ligand>
        <name>Zn(2+)</name>
        <dbReference type="ChEBI" id="CHEBI:29105"/>
    </ligand>
</feature>
<dbReference type="EC" id="3.-.-.-" evidence="1"/>
<dbReference type="EMBL" id="CP000557">
    <property type="protein sequence ID" value="ABO65911.1"/>
    <property type="molecule type" value="Genomic_DNA"/>
</dbReference>
<dbReference type="RefSeq" id="WP_011886844.1">
    <property type="nucleotide sequence ID" value="NC_009328.1"/>
</dbReference>
<dbReference type="SMR" id="A4IKQ7"/>
<dbReference type="GeneID" id="87621843"/>
<dbReference type="KEGG" id="gtn:GTNG_0529"/>
<dbReference type="eggNOG" id="COG2318">
    <property type="taxonomic scope" value="Bacteria"/>
</dbReference>
<dbReference type="HOGENOM" id="CLU_105789_1_0_9"/>
<dbReference type="Proteomes" id="UP000001578">
    <property type="component" value="Chromosome"/>
</dbReference>
<dbReference type="GO" id="GO:0005737">
    <property type="term" value="C:cytoplasm"/>
    <property type="evidence" value="ECO:0007669"/>
    <property type="project" value="UniProtKB-SubCell"/>
</dbReference>
<dbReference type="GO" id="GO:0016787">
    <property type="term" value="F:hydrolase activity"/>
    <property type="evidence" value="ECO:0007669"/>
    <property type="project" value="UniProtKB-UniRule"/>
</dbReference>
<dbReference type="GO" id="GO:0008270">
    <property type="term" value="F:zinc ion binding"/>
    <property type="evidence" value="ECO:0007669"/>
    <property type="project" value="UniProtKB-UniRule"/>
</dbReference>
<dbReference type="Gene3D" id="1.20.120.450">
    <property type="entry name" value="dinb family like domain"/>
    <property type="match status" value="1"/>
</dbReference>
<dbReference type="HAMAP" id="MF_01256">
    <property type="entry name" value="YfiT_hydrol"/>
    <property type="match status" value="1"/>
</dbReference>
<dbReference type="InterPro" id="IPR024775">
    <property type="entry name" value="DinB-like"/>
</dbReference>
<dbReference type="InterPro" id="IPR034660">
    <property type="entry name" value="DinB/YfiT-like"/>
</dbReference>
<dbReference type="InterPro" id="IPR023774">
    <property type="entry name" value="Put_metal_dep_hydrolase_YfiT"/>
</dbReference>
<dbReference type="NCBIfam" id="NF009807">
    <property type="entry name" value="PRK13291.1"/>
    <property type="match status" value="1"/>
</dbReference>
<dbReference type="Pfam" id="PF12867">
    <property type="entry name" value="DinB_2"/>
    <property type="match status" value="1"/>
</dbReference>
<dbReference type="SUPFAM" id="SSF109854">
    <property type="entry name" value="DinB/YfiT-like putative metalloenzymes"/>
    <property type="match status" value="1"/>
</dbReference>
<organism>
    <name type="scientific">Geobacillus thermodenitrificans (strain NG80-2)</name>
    <dbReference type="NCBI Taxonomy" id="420246"/>
    <lineage>
        <taxon>Bacteria</taxon>
        <taxon>Bacillati</taxon>
        <taxon>Bacillota</taxon>
        <taxon>Bacilli</taxon>
        <taxon>Bacillales</taxon>
        <taxon>Anoxybacillaceae</taxon>
        <taxon>Geobacillus</taxon>
    </lineage>
</organism>
<protein>
    <recommendedName>
        <fullName evidence="1">Putative metal-dependent hydrolase GTNG_0529</fullName>
        <ecNumber evidence="1">3.-.-.-</ecNumber>
    </recommendedName>
</protein>
<sequence>MSTIDPIRYPIGTFQAPAQFRAEDVKEWIAAIRELPDALRAAVAGLNDEQLNTPYRDGGWTVAQVVHHLADASMNAFLRTKWGLTEDKPAIKPFEESEWAKTADARSLPIEPSLMLLEGLHVRWATLLESMTEADFQRLICPEGAKQAMPLYVLTALYTWHGKHHTAQIMSLRKRKGW</sequence>